<reference key="1">
    <citation type="journal article" date="1996" name="DNA Res.">
        <title>Sequence analysis of the genome of the unicellular cyanobacterium Synechocystis sp. strain PCC6803. II. Sequence determination of the entire genome and assignment of potential protein-coding regions.</title>
        <authorList>
            <person name="Kaneko T."/>
            <person name="Sato S."/>
            <person name="Kotani H."/>
            <person name="Tanaka A."/>
            <person name="Asamizu E."/>
            <person name="Nakamura Y."/>
            <person name="Miyajima N."/>
            <person name="Hirosawa M."/>
            <person name="Sugiura M."/>
            <person name="Sasamoto S."/>
            <person name="Kimura T."/>
            <person name="Hosouchi T."/>
            <person name="Matsuno A."/>
            <person name="Muraki A."/>
            <person name="Nakazaki N."/>
            <person name="Naruo K."/>
            <person name="Okumura S."/>
            <person name="Shimpo S."/>
            <person name="Takeuchi C."/>
            <person name="Wada T."/>
            <person name="Watanabe A."/>
            <person name="Yamada M."/>
            <person name="Yasuda M."/>
            <person name="Tabata S."/>
        </authorList>
    </citation>
    <scope>NUCLEOTIDE SEQUENCE [LARGE SCALE GENOMIC DNA]</scope>
    <source>
        <strain>ATCC 27184 / PCC 6803 / Kazusa</strain>
    </source>
</reference>
<gene>
    <name evidence="1" type="primary">rimM</name>
    <name type="ordered locus">slr0808</name>
</gene>
<evidence type="ECO:0000255" key="1">
    <source>
        <dbReference type="HAMAP-Rule" id="MF_00014"/>
    </source>
</evidence>
<feature type="chain" id="PRO_0000163377" description="Ribosome maturation factor RimM">
    <location>
        <begin position="1"/>
        <end position="185"/>
    </location>
</feature>
<feature type="domain" description="PRC barrel" evidence="1">
    <location>
        <begin position="108"/>
        <end position="183"/>
    </location>
</feature>
<protein>
    <recommendedName>
        <fullName evidence="1">Ribosome maturation factor RimM</fullName>
    </recommendedName>
</protein>
<organism>
    <name type="scientific">Synechocystis sp. (strain ATCC 27184 / PCC 6803 / Kazusa)</name>
    <dbReference type="NCBI Taxonomy" id="1111708"/>
    <lineage>
        <taxon>Bacteria</taxon>
        <taxon>Bacillati</taxon>
        <taxon>Cyanobacteriota</taxon>
        <taxon>Cyanophyceae</taxon>
        <taxon>Synechococcales</taxon>
        <taxon>Merismopediaceae</taxon>
        <taxon>Synechocystis</taxon>
    </lineage>
</organism>
<sequence length="185" mass="20716">MAEPMTEQQKTENWLEIGTIVAAQGIQGEVRVLSASDFPARFLTKGQRWIRKTPQETPQPLTLKKGKQIPGKNLYILRFTEITDRNQAEALVNYQLLVPATDRLPLEPGEFHVTDLLGLIVYDHDNGDRLGIVTDFYSAGNDLLGITLDKNPDKEVLVPFVEAIVPTVELAEQRLEIKTIPGLLD</sequence>
<dbReference type="EMBL" id="BA000022">
    <property type="protein sequence ID" value="BAA18110.1"/>
    <property type="molecule type" value="Genomic_DNA"/>
</dbReference>
<dbReference type="PIR" id="S75549">
    <property type="entry name" value="S75549"/>
</dbReference>
<dbReference type="SMR" id="P74035"/>
<dbReference type="FunCoup" id="P74035">
    <property type="interactions" value="332"/>
</dbReference>
<dbReference type="IntAct" id="P74035">
    <property type="interactions" value="1"/>
</dbReference>
<dbReference type="STRING" id="1148.gene:10498981"/>
<dbReference type="PaxDb" id="1148-1653194"/>
<dbReference type="EnsemblBacteria" id="BAA18110">
    <property type="protein sequence ID" value="BAA18110"/>
    <property type="gene ID" value="BAA18110"/>
</dbReference>
<dbReference type="KEGG" id="syn:slr0808"/>
<dbReference type="eggNOG" id="COG0806">
    <property type="taxonomic scope" value="Bacteria"/>
</dbReference>
<dbReference type="InParanoid" id="P74035"/>
<dbReference type="PhylomeDB" id="P74035"/>
<dbReference type="Proteomes" id="UP000001425">
    <property type="component" value="Chromosome"/>
</dbReference>
<dbReference type="GO" id="GO:0005829">
    <property type="term" value="C:cytosol"/>
    <property type="evidence" value="ECO:0000318"/>
    <property type="project" value="GO_Central"/>
</dbReference>
<dbReference type="GO" id="GO:0005840">
    <property type="term" value="C:ribosome"/>
    <property type="evidence" value="ECO:0007669"/>
    <property type="project" value="InterPro"/>
</dbReference>
<dbReference type="GO" id="GO:0043022">
    <property type="term" value="F:ribosome binding"/>
    <property type="evidence" value="ECO:0007669"/>
    <property type="project" value="InterPro"/>
</dbReference>
<dbReference type="GO" id="GO:0030490">
    <property type="term" value="P:maturation of SSU-rRNA"/>
    <property type="evidence" value="ECO:0000318"/>
    <property type="project" value="GO_Central"/>
</dbReference>
<dbReference type="Gene3D" id="2.30.30.240">
    <property type="entry name" value="PRC-barrel domain"/>
    <property type="match status" value="1"/>
</dbReference>
<dbReference type="Gene3D" id="2.40.30.60">
    <property type="entry name" value="RimM"/>
    <property type="match status" value="1"/>
</dbReference>
<dbReference type="HAMAP" id="MF_00014">
    <property type="entry name" value="Ribosome_mat_RimM"/>
    <property type="match status" value="1"/>
</dbReference>
<dbReference type="InterPro" id="IPR027275">
    <property type="entry name" value="PRC-brl_dom"/>
</dbReference>
<dbReference type="InterPro" id="IPR011033">
    <property type="entry name" value="PRC_barrel-like_sf"/>
</dbReference>
<dbReference type="InterPro" id="IPR011961">
    <property type="entry name" value="RimM"/>
</dbReference>
<dbReference type="InterPro" id="IPR002676">
    <property type="entry name" value="RimM_N"/>
</dbReference>
<dbReference type="InterPro" id="IPR036976">
    <property type="entry name" value="RimM_N_sf"/>
</dbReference>
<dbReference type="InterPro" id="IPR009000">
    <property type="entry name" value="Transl_B-barrel_sf"/>
</dbReference>
<dbReference type="NCBIfam" id="TIGR02273">
    <property type="entry name" value="16S_RimM"/>
    <property type="match status" value="1"/>
</dbReference>
<dbReference type="PANTHER" id="PTHR33692">
    <property type="entry name" value="RIBOSOME MATURATION FACTOR RIMM"/>
    <property type="match status" value="1"/>
</dbReference>
<dbReference type="PANTHER" id="PTHR33692:SF1">
    <property type="entry name" value="RIBOSOME MATURATION FACTOR RIMM"/>
    <property type="match status" value="1"/>
</dbReference>
<dbReference type="Pfam" id="PF05239">
    <property type="entry name" value="PRC"/>
    <property type="match status" value="1"/>
</dbReference>
<dbReference type="Pfam" id="PF01782">
    <property type="entry name" value="RimM"/>
    <property type="match status" value="1"/>
</dbReference>
<dbReference type="SUPFAM" id="SSF50346">
    <property type="entry name" value="PRC-barrel domain"/>
    <property type="match status" value="1"/>
</dbReference>
<dbReference type="SUPFAM" id="SSF50447">
    <property type="entry name" value="Translation proteins"/>
    <property type="match status" value="1"/>
</dbReference>
<comment type="function">
    <text evidence="1">An accessory protein needed during the final step in the assembly of 30S ribosomal subunit, possibly for assembly of the head region. Essential for efficient processing of 16S rRNA. May be needed both before and after RbfA during the maturation of 16S rRNA. It has affinity for free ribosomal 30S subunits but not for 70S ribosomes.</text>
</comment>
<comment type="subunit">
    <text evidence="1">Binds ribosomal protein uS19.</text>
</comment>
<comment type="subcellular location">
    <subcellularLocation>
        <location evidence="1">Cytoplasm</location>
    </subcellularLocation>
</comment>
<comment type="domain">
    <text evidence="1">The PRC barrel domain binds ribosomal protein uS19.</text>
</comment>
<comment type="similarity">
    <text evidence="1">Belongs to the RimM family.</text>
</comment>
<proteinExistence type="inferred from homology"/>
<name>RIMM_SYNY3</name>
<accession>P74035</accession>
<keyword id="KW-0143">Chaperone</keyword>
<keyword id="KW-0963">Cytoplasm</keyword>
<keyword id="KW-1185">Reference proteome</keyword>
<keyword id="KW-0690">Ribosome biogenesis</keyword>
<keyword id="KW-0698">rRNA processing</keyword>